<dbReference type="EC" id="2.1.1.37" evidence="5"/>
<dbReference type="EMBL" id="AC013289">
    <property type="protein sequence ID" value="AAG52543.1"/>
    <property type="molecule type" value="Genomic_DNA"/>
</dbReference>
<dbReference type="EMBL" id="CP002684">
    <property type="protein sequence ID" value="AEE34973.1"/>
    <property type="molecule type" value="Genomic_DNA"/>
</dbReference>
<dbReference type="EMBL" id="AF383170">
    <property type="protein sequence ID" value="AAK69756.1"/>
    <property type="molecule type" value="Genomic_DNA"/>
</dbReference>
<dbReference type="EMBL" id="AF364174">
    <property type="protein sequence ID" value="AAK71870.1"/>
    <property type="molecule type" value="Genomic_DNA"/>
</dbReference>
<dbReference type="PIR" id="G96719">
    <property type="entry name" value="G96719"/>
</dbReference>
<dbReference type="RefSeq" id="NP_177135.1">
    <property type="nucleotide sequence ID" value="NM_105645.4"/>
</dbReference>
<dbReference type="SMR" id="Q94F88"/>
<dbReference type="BioGRID" id="28534">
    <property type="interactions" value="3"/>
</dbReference>
<dbReference type="DIP" id="DIP-60719N"/>
<dbReference type="FunCoup" id="Q94F88">
    <property type="interactions" value="822"/>
</dbReference>
<dbReference type="STRING" id="3702.Q94F88"/>
<dbReference type="REBASE" id="4853">
    <property type="entry name" value="M.AthCMT3"/>
</dbReference>
<dbReference type="PaxDb" id="3702-AT1G69770.1"/>
<dbReference type="ProteomicsDB" id="241236"/>
<dbReference type="EnsemblPlants" id="AT1G69770.1">
    <property type="protein sequence ID" value="AT1G69770.1"/>
    <property type="gene ID" value="AT1G69770"/>
</dbReference>
<dbReference type="GeneID" id="843313"/>
<dbReference type="Gramene" id="AT1G69770.1">
    <property type="protein sequence ID" value="AT1G69770.1"/>
    <property type="gene ID" value="AT1G69770"/>
</dbReference>
<dbReference type="KEGG" id="ath:AT1G69770"/>
<dbReference type="Araport" id="AT1G69770"/>
<dbReference type="TAIR" id="AT1G69770">
    <property type="gene designation" value="CMT3"/>
</dbReference>
<dbReference type="eggNOG" id="ENOG502QW29">
    <property type="taxonomic scope" value="Eukaryota"/>
</dbReference>
<dbReference type="HOGENOM" id="CLU_004921_0_0_1"/>
<dbReference type="InParanoid" id="Q94F88"/>
<dbReference type="OMA" id="VCEIPKR"/>
<dbReference type="PhylomeDB" id="Q94F88"/>
<dbReference type="BRENDA" id="2.1.1.37">
    <property type="organism ID" value="399"/>
</dbReference>
<dbReference type="CD-CODE" id="4299E36E">
    <property type="entry name" value="Nucleolus"/>
</dbReference>
<dbReference type="PRO" id="PR:Q94F88"/>
<dbReference type="Proteomes" id="UP000006548">
    <property type="component" value="Chromosome 1"/>
</dbReference>
<dbReference type="ExpressionAtlas" id="Q94F88">
    <property type="expression patterns" value="baseline and differential"/>
</dbReference>
<dbReference type="GO" id="GO:0005634">
    <property type="term" value="C:nucleus"/>
    <property type="evidence" value="ECO:0007669"/>
    <property type="project" value="UniProtKB-SubCell"/>
</dbReference>
<dbReference type="GO" id="GO:0003682">
    <property type="term" value="F:chromatin binding"/>
    <property type="evidence" value="ECO:0007669"/>
    <property type="project" value="InterPro"/>
</dbReference>
<dbReference type="GO" id="GO:0003886">
    <property type="term" value="F:DNA (cytosine-5-)-methyltransferase activity"/>
    <property type="evidence" value="ECO:0000315"/>
    <property type="project" value="TAIR"/>
</dbReference>
<dbReference type="GO" id="GO:0051719">
    <property type="term" value="F:DNA (cytosine-5-)-methyltransferase activity, acting on CpN substrates"/>
    <property type="evidence" value="ECO:0000315"/>
    <property type="project" value="UniProtKB"/>
</dbReference>
<dbReference type="GO" id="GO:0003677">
    <property type="term" value="F:DNA binding"/>
    <property type="evidence" value="ECO:0007669"/>
    <property type="project" value="UniProtKB-KW"/>
</dbReference>
<dbReference type="GO" id="GO:0031625">
    <property type="term" value="F:ubiquitin protein ligase binding"/>
    <property type="evidence" value="ECO:0000353"/>
    <property type="project" value="UniProtKB"/>
</dbReference>
<dbReference type="GO" id="GO:0006346">
    <property type="term" value="P:DNA methylation-dependent constitutive heterochromatin formation"/>
    <property type="evidence" value="ECO:0000314"/>
    <property type="project" value="GO_Central"/>
</dbReference>
<dbReference type="GO" id="GO:0032259">
    <property type="term" value="P:methylation"/>
    <property type="evidence" value="ECO:0007669"/>
    <property type="project" value="UniProtKB-KW"/>
</dbReference>
<dbReference type="GO" id="GO:0045814">
    <property type="term" value="P:negative regulation of gene expression, epigenetic"/>
    <property type="evidence" value="ECO:0000316"/>
    <property type="project" value="TAIR"/>
</dbReference>
<dbReference type="GO" id="GO:0010069">
    <property type="term" value="P:zygote asymmetric cytokinesis in embryo sac"/>
    <property type="evidence" value="ECO:0000315"/>
    <property type="project" value="TAIR"/>
</dbReference>
<dbReference type="CDD" id="cd04716">
    <property type="entry name" value="BAH_plantDCM_I"/>
    <property type="match status" value="1"/>
</dbReference>
<dbReference type="CDD" id="cd18635">
    <property type="entry name" value="CD_CMT3_like"/>
    <property type="match status" value="1"/>
</dbReference>
<dbReference type="FunFam" id="3.90.120.10:FF:000003">
    <property type="entry name" value="DNA (cytosine-5)-methyltransferase 1"/>
    <property type="match status" value="1"/>
</dbReference>
<dbReference type="FunFam" id="3.40.50.150:FF:000464">
    <property type="entry name" value="DNA (Cytosine-5)-methyltransferase CMT2"/>
    <property type="match status" value="1"/>
</dbReference>
<dbReference type="Gene3D" id="2.30.30.490">
    <property type="match status" value="1"/>
</dbReference>
<dbReference type="Gene3D" id="3.90.120.10">
    <property type="entry name" value="DNA Methylase, subunit A, domain 2"/>
    <property type="match status" value="1"/>
</dbReference>
<dbReference type="Gene3D" id="3.40.50.150">
    <property type="entry name" value="Vaccinia Virus protein VP39"/>
    <property type="match status" value="2"/>
</dbReference>
<dbReference type="InterPro" id="IPR001025">
    <property type="entry name" value="BAH_dom"/>
</dbReference>
<dbReference type="InterPro" id="IPR043151">
    <property type="entry name" value="BAH_sf"/>
</dbReference>
<dbReference type="InterPro" id="IPR050390">
    <property type="entry name" value="C5-Methyltransferase"/>
</dbReference>
<dbReference type="InterPro" id="IPR018117">
    <property type="entry name" value="C5_DNA_meth_AS"/>
</dbReference>
<dbReference type="InterPro" id="IPR001525">
    <property type="entry name" value="C5_MeTfrase"/>
</dbReference>
<dbReference type="InterPro" id="IPR016197">
    <property type="entry name" value="Chromo-like_dom_sf"/>
</dbReference>
<dbReference type="InterPro" id="IPR000953">
    <property type="entry name" value="Chromo/chromo_shadow_dom"/>
</dbReference>
<dbReference type="InterPro" id="IPR023780">
    <property type="entry name" value="Chromo_domain"/>
</dbReference>
<dbReference type="InterPro" id="IPR023779">
    <property type="entry name" value="Chromodomain_CS"/>
</dbReference>
<dbReference type="InterPro" id="IPR029063">
    <property type="entry name" value="SAM-dependent_MTases_sf"/>
</dbReference>
<dbReference type="NCBIfam" id="TIGR00675">
    <property type="entry name" value="dcm"/>
    <property type="match status" value="1"/>
</dbReference>
<dbReference type="PANTHER" id="PTHR10629">
    <property type="entry name" value="CYTOSINE-SPECIFIC METHYLTRANSFERASE"/>
    <property type="match status" value="1"/>
</dbReference>
<dbReference type="PANTHER" id="PTHR10629:SF50">
    <property type="entry name" value="DNA (CYTOSINE-5)-METHYLTRANSFERASE CMT3"/>
    <property type="match status" value="1"/>
</dbReference>
<dbReference type="Pfam" id="PF01426">
    <property type="entry name" value="BAH"/>
    <property type="match status" value="1"/>
</dbReference>
<dbReference type="Pfam" id="PF00385">
    <property type="entry name" value="Chromo"/>
    <property type="match status" value="1"/>
</dbReference>
<dbReference type="Pfam" id="PF00145">
    <property type="entry name" value="DNA_methylase"/>
    <property type="match status" value="1"/>
</dbReference>
<dbReference type="PRINTS" id="PR00105">
    <property type="entry name" value="C5METTRFRASE"/>
</dbReference>
<dbReference type="SMART" id="SM00439">
    <property type="entry name" value="BAH"/>
    <property type="match status" value="1"/>
</dbReference>
<dbReference type="SMART" id="SM00298">
    <property type="entry name" value="CHROMO"/>
    <property type="match status" value="1"/>
</dbReference>
<dbReference type="SUPFAM" id="SSF54160">
    <property type="entry name" value="Chromo domain-like"/>
    <property type="match status" value="1"/>
</dbReference>
<dbReference type="SUPFAM" id="SSF53335">
    <property type="entry name" value="S-adenosyl-L-methionine-dependent methyltransferases"/>
    <property type="match status" value="1"/>
</dbReference>
<dbReference type="PROSITE" id="PS51038">
    <property type="entry name" value="BAH"/>
    <property type="match status" value="1"/>
</dbReference>
<dbReference type="PROSITE" id="PS00094">
    <property type="entry name" value="C5_MTASE_1"/>
    <property type="match status" value="1"/>
</dbReference>
<dbReference type="PROSITE" id="PS00598">
    <property type="entry name" value="CHROMO_1"/>
    <property type="match status" value="1"/>
</dbReference>
<dbReference type="PROSITE" id="PS50013">
    <property type="entry name" value="CHROMO_2"/>
    <property type="match status" value="1"/>
</dbReference>
<dbReference type="PROSITE" id="PS51679">
    <property type="entry name" value="SAM_MT_C5"/>
    <property type="match status" value="1"/>
</dbReference>
<gene>
    <name evidence="14 15 16" type="primary">CMT3</name>
    <name evidence="18" type="ordered locus">At1g69770</name>
    <name evidence="19" type="ORF">T6C23.3</name>
</gene>
<keyword id="KW-0156">Chromatin regulator</keyword>
<keyword id="KW-0238">DNA-binding</keyword>
<keyword id="KW-0489">Methyltransferase</keyword>
<keyword id="KW-0539">Nucleus</keyword>
<keyword id="KW-1185">Reference proteome</keyword>
<keyword id="KW-0949">S-adenosyl-L-methionine</keyword>
<keyword id="KW-0804">Transcription</keyword>
<keyword id="KW-0805">Transcription regulation</keyword>
<keyword id="KW-0808">Transferase</keyword>
<keyword id="KW-0832">Ubl conjugation</keyword>
<sequence length="839" mass="94905">MAPKRKRPATKDDTTKSIPKPKKRAPKRAKTVKEEPVTVVEEGEKHVARFLDEPIPESEAKSTWPDRYKPIEVQPPKASSRKKTKDDEKVEIIRARCHYRRAIVDERQIYELNDDAYVQSGEGKDPFICKIIEMFEGANGKLYFTARWFYRPSDTVMKEFEILIKKKRVFFSEIQDTNELGLLEKKLNILMIPLNENTKETIPATENCDFFCDMNYFLPYDTFEAIQQETMMAISESSTISSDTDIREGAAAISEIGECSQETEGHKKATLLDLYSGCGAMSTGLCMGAQLSGLNLVTKWAVDMNAHACKSLQHNHPETNVRNMTAEDFLFLLKEWEKLCIHFSLRNSPNSEEYANLHGLNNVEDNEDVSEESENEDDGEVFTVDKIVGISFGVPKKLLKRGLYLKVRWLNYDDSHDTWEPIEGLSNCRGKIEEFVKLGYKSGILPLPGGVDVVCGGPPCQGISGHNRFRNLLDPLEDQKNKQLLVYMNIVEYLKPKFVLMENVVDMLKMAKGYLARFAVGRLLQMNYQVRNGMMAAGAYGLAQFRLRFFLWGALPSEIIPQFPLPTHDLVHRGNIVKEFQGNIVAYDEGHTVKLADKLLLKDVISDLPAVANSEKRDEITYDKDPTTPFQKFIRLRKDEASGSQSKSKSKKHVLYDHHPLNLNINDYERVCQVPKRKGANFRDFPGVIVGPGNVVKLEEGKERVKLESGKTLVPDYALTYVDGKSCKPFGRLWWDEIVPTVVTRAEPHNQVIIHPEQNRVLSIRENARLQGFPDDYKLFGPPKQKYIQVGNAVAVPVAKALGYALGTAFQGLAVGKDPLLTLPEGFAFMKPTLPSELA</sequence>
<organism>
    <name type="scientific">Arabidopsis thaliana</name>
    <name type="common">Mouse-ear cress</name>
    <dbReference type="NCBI Taxonomy" id="3702"/>
    <lineage>
        <taxon>Eukaryota</taxon>
        <taxon>Viridiplantae</taxon>
        <taxon>Streptophyta</taxon>
        <taxon>Embryophyta</taxon>
        <taxon>Tracheophyta</taxon>
        <taxon>Spermatophyta</taxon>
        <taxon>Magnoliopsida</taxon>
        <taxon>eudicotyledons</taxon>
        <taxon>Gunneridae</taxon>
        <taxon>Pentapetalae</taxon>
        <taxon>rosids</taxon>
        <taxon>malvids</taxon>
        <taxon>Brassicales</taxon>
        <taxon>Brassicaceae</taxon>
        <taxon>Camelineae</taxon>
        <taxon>Arabidopsis</taxon>
    </lineage>
</organism>
<comment type="function">
    <text evidence="7 8 9 11 13">Involved in the CpXpG methylation (e.g. CHG cytosine) and in gene silencing (PubMed:26798133). Methylates preferentially transposon-related sequences. Functionally redundant to DRM1/DRM2 to maintain non-CpG methylation. Involved in RNA-directed DNA methylation.</text>
</comment>
<comment type="catalytic activity">
    <reaction evidence="5">
        <text>a 2'-deoxycytidine in DNA + S-adenosyl-L-methionine = a 5-methyl-2'-deoxycytidine in DNA + S-adenosyl-L-homocysteine + H(+)</text>
        <dbReference type="Rhea" id="RHEA:13681"/>
        <dbReference type="Rhea" id="RHEA-COMP:11369"/>
        <dbReference type="Rhea" id="RHEA-COMP:11370"/>
        <dbReference type="ChEBI" id="CHEBI:15378"/>
        <dbReference type="ChEBI" id="CHEBI:57856"/>
        <dbReference type="ChEBI" id="CHEBI:59789"/>
        <dbReference type="ChEBI" id="CHEBI:85452"/>
        <dbReference type="ChEBI" id="CHEBI:85454"/>
        <dbReference type="EC" id="2.1.1.37"/>
    </reaction>
</comment>
<comment type="subunit">
    <text evidence="10 12 13">Homodimer. Interacts with HP1 and, through its chromodomain, with the N-terminal tail of histone H3 doubly methylated at 'Lys-9' and 'Lys-27'. Binds to JMJ24 (PubMed:26798133).</text>
</comment>
<comment type="subcellular location">
    <subcellularLocation>
        <location evidence="1">Nucleus</location>
    </subcellularLocation>
</comment>
<comment type="PTM">
    <text evidence="13">Ubiquitinated by JMJ24, subsequently beingargeted to proteasomal degradation thus initiating the destabilization of the heterochromatic state of endogenous silenced loci.</text>
</comment>
<comment type="disruption phenotype">
    <text evidence="13">Reduced DNA methylation (e.g. CHG cytosine) at least on FWA, QQS and SDC loci.</text>
</comment>
<comment type="similarity">
    <text evidence="4">Belongs to the class I-like SAM-binding methyltransferase superfamily. C5-methyltransferase family.</text>
</comment>
<accession>Q94F88</accession>
<accession>Q94FN4</accession>
<accession>Q9C9L8</accession>
<evidence type="ECO:0000250" key="1"/>
<evidence type="ECO:0000255" key="2">
    <source>
        <dbReference type="PROSITE-ProRule" id="PRU00053"/>
    </source>
</evidence>
<evidence type="ECO:0000255" key="3">
    <source>
        <dbReference type="PROSITE-ProRule" id="PRU00370"/>
    </source>
</evidence>
<evidence type="ECO:0000255" key="4">
    <source>
        <dbReference type="PROSITE-ProRule" id="PRU01016"/>
    </source>
</evidence>
<evidence type="ECO:0000255" key="5">
    <source>
        <dbReference type="PROSITE-ProRule" id="PRU10018"/>
    </source>
</evidence>
<evidence type="ECO:0000256" key="6">
    <source>
        <dbReference type="SAM" id="MobiDB-lite"/>
    </source>
</evidence>
<evidence type="ECO:0000269" key="7">
    <source>
    </source>
</evidence>
<evidence type="ECO:0000269" key="8">
    <source>
    </source>
</evidence>
<evidence type="ECO:0000269" key="9">
    <source>
    </source>
</evidence>
<evidence type="ECO:0000269" key="10">
    <source>
    </source>
</evidence>
<evidence type="ECO:0000269" key="11">
    <source>
    </source>
</evidence>
<evidence type="ECO:0000269" key="12">
    <source>
    </source>
</evidence>
<evidence type="ECO:0000269" key="13">
    <source>
    </source>
</evidence>
<evidence type="ECO:0000303" key="14">
    <source>
    </source>
</evidence>
<evidence type="ECO:0000303" key="15">
    <source>
    </source>
</evidence>
<evidence type="ECO:0000303" key="16">
    <source>
    </source>
</evidence>
<evidence type="ECO:0000305" key="17"/>
<evidence type="ECO:0000312" key="18">
    <source>
        <dbReference type="Araport" id="AT1G69770"/>
    </source>
</evidence>
<evidence type="ECO:0000312" key="19">
    <source>
        <dbReference type="EMBL" id="AAG52543.1"/>
    </source>
</evidence>
<name>CMT3_ARATH</name>
<proteinExistence type="evidence at protein level"/>
<reference key="1">
    <citation type="journal article" date="2000" name="Nature">
        <title>Sequence and analysis of chromosome 1 of the plant Arabidopsis thaliana.</title>
        <authorList>
            <person name="Theologis A."/>
            <person name="Ecker J.R."/>
            <person name="Palm C.J."/>
            <person name="Federspiel N.A."/>
            <person name="Kaul S."/>
            <person name="White O."/>
            <person name="Alonso J."/>
            <person name="Altafi H."/>
            <person name="Araujo R."/>
            <person name="Bowman C.L."/>
            <person name="Brooks S.Y."/>
            <person name="Buehler E."/>
            <person name="Chan A."/>
            <person name="Chao Q."/>
            <person name="Chen H."/>
            <person name="Cheuk R.F."/>
            <person name="Chin C.W."/>
            <person name="Chung M.K."/>
            <person name="Conn L."/>
            <person name="Conway A.B."/>
            <person name="Conway A.R."/>
            <person name="Creasy T.H."/>
            <person name="Dewar K."/>
            <person name="Dunn P."/>
            <person name="Etgu P."/>
            <person name="Feldblyum T.V."/>
            <person name="Feng J.-D."/>
            <person name="Fong B."/>
            <person name="Fujii C.Y."/>
            <person name="Gill J.E."/>
            <person name="Goldsmith A.D."/>
            <person name="Haas B."/>
            <person name="Hansen N.F."/>
            <person name="Hughes B."/>
            <person name="Huizar L."/>
            <person name="Hunter J.L."/>
            <person name="Jenkins J."/>
            <person name="Johnson-Hopson C."/>
            <person name="Khan S."/>
            <person name="Khaykin E."/>
            <person name="Kim C.J."/>
            <person name="Koo H.L."/>
            <person name="Kremenetskaia I."/>
            <person name="Kurtz D.B."/>
            <person name="Kwan A."/>
            <person name="Lam B."/>
            <person name="Langin-Hooper S."/>
            <person name="Lee A."/>
            <person name="Lee J.M."/>
            <person name="Lenz C.A."/>
            <person name="Li J.H."/>
            <person name="Li Y.-P."/>
            <person name="Lin X."/>
            <person name="Liu S.X."/>
            <person name="Liu Z.A."/>
            <person name="Luros J.S."/>
            <person name="Maiti R."/>
            <person name="Marziali A."/>
            <person name="Militscher J."/>
            <person name="Miranda M."/>
            <person name="Nguyen M."/>
            <person name="Nierman W.C."/>
            <person name="Osborne B.I."/>
            <person name="Pai G."/>
            <person name="Peterson J."/>
            <person name="Pham P.K."/>
            <person name="Rizzo M."/>
            <person name="Rooney T."/>
            <person name="Rowley D."/>
            <person name="Sakano H."/>
            <person name="Salzberg S.L."/>
            <person name="Schwartz J.R."/>
            <person name="Shinn P."/>
            <person name="Southwick A.M."/>
            <person name="Sun H."/>
            <person name="Tallon L.J."/>
            <person name="Tambunga G."/>
            <person name="Toriumi M.J."/>
            <person name="Town C.D."/>
            <person name="Utterback T."/>
            <person name="Van Aken S."/>
            <person name="Vaysberg M."/>
            <person name="Vysotskaia V.S."/>
            <person name="Walker M."/>
            <person name="Wu D."/>
            <person name="Yu G."/>
            <person name="Fraser C.M."/>
            <person name="Venter J.C."/>
            <person name="Davis R.W."/>
        </authorList>
    </citation>
    <scope>NUCLEOTIDE SEQUENCE [LARGE SCALE GENOMIC DNA]</scope>
    <source>
        <strain>cv. Columbia</strain>
    </source>
</reference>
<reference key="2">
    <citation type="journal article" date="2017" name="Plant J.">
        <title>Araport11: a complete reannotation of the Arabidopsis thaliana reference genome.</title>
        <authorList>
            <person name="Cheng C.Y."/>
            <person name="Krishnakumar V."/>
            <person name="Chan A.P."/>
            <person name="Thibaud-Nissen F."/>
            <person name="Schobel S."/>
            <person name="Town C.D."/>
        </authorList>
    </citation>
    <scope>GENOME REANNOTATION</scope>
    <source>
        <strain>cv. Columbia</strain>
    </source>
</reference>
<reference key="3">
    <citation type="journal article" date="2001" name="Genes Dev.">
        <title>Arabidopsis cmt3 chromomethylase mutations block non-CG methylation and silencing of an endogenous gene.</title>
        <authorList>
            <person name="Bartee L."/>
            <person name="Malagnac F."/>
            <person name="Bender J."/>
        </authorList>
    </citation>
    <scope>NUCLEOTIDE SEQUENCE [GENOMIC DNA]</scope>
    <scope>MUTAGENESIS OF GLY-279; GLY-456; GLY-465; LEU-542; ARG-683; LEU-733; PRO-748 AND GLY-807</scope>
    <scope>FUNCTION</scope>
    <source>
        <strain>cv. Wassilewskija</strain>
    </source>
</reference>
<reference key="4">
    <citation type="journal article" date="2001" name="Science">
        <title>Requirement of CHROMOMETHYLASE3 for maintenance of CpXpG methylation.</title>
        <authorList>
            <person name="Lindroth A.M."/>
            <person name="Cao X."/>
            <person name="Jackson J.P."/>
            <person name="Zilberman D."/>
            <person name="McCallum C.M."/>
            <person name="Henikoff S."/>
            <person name="Jacobsen S.E."/>
        </authorList>
    </citation>
    <scope>NUCLEOTIDE SEQUENCE [GENOMIC DNA]</scope>
    <scope>MUTAGENESIS OF ARG-470; GLY-541; GLY-724; SER-763 AND ARG-769</scope>
    <scope>FUNCTION</scope>
    <source>
        <strain>cv. Landsberg erecta</strain>
    </source>
</reference>
<reference key="5">
    <citation type="journal article" date="2004" name="EMBO J.">
        <title>Dual histone H3 methylation marks at lysines 9 and 27 required for interaction with CHROMOMETHYLASE3.</title>
        <authorList>
            <person name="Lindroth A.M."/>
            <person name="Shultis D."/>
            <person name="Jasencakova Z."/>
            <person name="Fuchs J."/>
            <person name="Johnson L."/>
            <person name="Schubert D."/>
            <person name="Patnaik D."/>
            <person name="Pradhan S."/>
            <person name="Goodrich J."/>
            <person name="Schubert I."/>
            <person name="Jenuwein T."/>
            <person name="Khorasanizadeh S."/>
            <person name="Jacobsen S.E."/>
        </authorList>
    </citation>
    <scope>INTERACTION WITH H3</scope>
    <scope>MUTAGENESIS OF PHE-382</scope>
</reference>
<reference key="6">
    <citation type="journal article" date="2002" name="Nature">
        <title>Control of CpNpG DNA methylation by the KRYPTONITE histone H3 methyltransferase.</title>
        <authorList>
            <person name="Jackson J.P."/>
            <person name="Lindroth A.M."/>
            <person name="Cao X."/>
            <person name="Jacobsen S.E."/>
        </authorList>
    </citation>
    <scope>INTERACTION WITH HP1</scope>
</reference>
<reference key="7">
    <citation type="journal article" date="2002" name="Curr. Biol.">
        <title>Genome-wide profiling of DNA methylation reveals transposon targets of CHROMOMETHYLASE3.</title>
        <authorList>
            <person name="Tompa R."/>
            <person name="McCallum C.M."/>
            <person name="Delrow J."/>
            <person name="Henikoff J.G."/>
            <person name="van Steensel B."/>
            <person name="Henikoff S."/>
        </authorList>
    </citation>
    <scope>FUNCTION</scope>
</reference>
<reference key="8">
    <citation type="journal article" date="2003" name="Curr. Biol.">
        <title>Role of the DRM and CMT3 methyltransferases in RNA-directed DNA methylation.</title>
        <authorList>
            <person name="Cao X."/>
            <person name="Aufsatz W."/>
            <person name="Zilberman D."/>
            <person name="Mette M.F."/>
            <person name="Huang M.S."/>
            <person name="Matzke M."/>
            <person name="Jacobsen S.E."/>
        </authorList>
    </citation>
    <scope>FUNCTION</scope>
</reference>
<reference key="9">
    <citation type="journal article" date="2016" name="Genes Dev.">
        <title>JMJ24 targets CHROMOMETHYLASE3 for proteasomal degradation in Arabidopsis.</title>
        <authorList>
            <person name="Deng S."/>
            <person name="Jang I.-C."/>
            <person name="Su L."/>
            <person name="Xu J."/>
            <person name="Chua N.-H."/>
        </authorList>
    </citation>
    <scope>FUNCTION</scope>
    <scope>DISRUPTION PHENOTYPE</scope>
    <scope>PTM</scope>
    <scope>INTERACTION WITH JMJ24</scope>
    <source>
        <strain>cv. Columbia</strain>
    </source>
</reference>
<feature type="chain" id="PRO_0000246693" description="DNA (cytosine-5)-methyltransferase CMT3">
    <location>
        <begin position="1"/>
        <end position="839"/>
    </location>
</feature>
<feature type="domain" description="BAH" evidence="3">
    <location>
        <begin position="108"/>
        <end position="227"/>
    </location>
</feature>
<feature type="domain" description="SAM-dependent MTase C5-type" evidence="4">
    <location>
        <begin position="269"/>
        <end position="813"/>
    </location>
</feature>
<feature type="domain" description="Chromo" evidence="2">
    <location>
        <begin position="382"/>
        <end position="447"/>
    </location>
</feature>
<feature type="region of interest" description="Disordered" evidence="6">
    <location>
        <begin position="1"/>
        <end position="38"/>
    </location>
</feature>
<feature type="region of interest" description="Disordered" evidence="6">
    <location>
        <begin position="51"/>
        <end position="86"/>
    </location>
</feature>
<feature type="compositionally biased region" description="Basic residues" evidence="6">
    <location>
        <begin position="19"/>
        <end position="30"/>
    </location>
</feature>
<feature type="compositionally biased region" description="Basic and acidic residues" evidence="6">
    <location>
        <begin position="51"/>
        <end position="70"/>
    </location>
</feature>
<feature type="active site" evidence="4 5">
    <location>
        <position position="460"/>
    </location>
</feature>
<feature type="mutagenesis site" description="Loss of activity." evidence="8">
    <original>G</original>
    <variation>E</variation>
    <location>
        <position position="279"/>
    </location>
</feature>
<feature type="mutagenesis site" description="Loss of binding to H3." evidence="12">
    <original>F</original>
    <variation>A</variation>
    <location>
        <position position="382"/>
    </location>
</feature>
<feature type="mutagenesis site" description="Loss of activity." evidence="8">
    <original>G</original>
    <variation>D</variation>
    <location>
        <position position="456"/>
    </location>
</feature>
<feature type="mutagenesis site" description="Loss of activity." evidence="8">
    <original>G</original>
    <variation>D</variation>
    <location>
        <position position="465"/>
    </location>
</feature>
<feature type="mutagenesis site" description="In cmt3-10; partial loss of activity." evidence="7">
    <original>R</original>
    <variation>K</variation>
    <location>
        <position position="470"/>
    </location>
</feature>
<feature type="mutagenesis site" description="In cmt3-6; loss of activity." evidence="7">
    <original>G</original>
    <variation>E</variation>
    <location>
        <position position="541"/>
    </location>
</feature>
<feature type="mutagenesis site" description="Loss of activity." evidence="8">
    <original>L</original>
    <variation>F</variation>
    <location>
        <position position="542"/>
    </location>
</feature>
<feature type="mutagenesis site" description="Loss of activity." evidence="8">
    <original>R</original>
    <variation>K</variation>
    <location>
        <position position="683"/>
    </location>
</feature>
<feature type="mutagenesis site" description="In cmt3-4; loss of activity." evidence="7">
    <original>G</original>
    <variation>E</variation>
    <location>
        <position position="724"/>
    </location>
</feature>
<feature type="mutagenesis site" description="Loss of activity." evidence="8">
    <original>L</original>
    <variation>F</variation>
    <location>
        <position position="733"/>
    </location>
</feature>
<feature type="mutagenesis site" description="Loss of activity." evidence="8">
    <original>P</original>
    <variation>L</variation>
    <location>
        <position position="748"/>
    </location>
</feature>
<feature type="mutagenesis site" description="In cmt3-8; partial loss of activity." evidence="7">
    <original>S</original>
    <variation>F</variation>
    <location>
        <position position="763"/>
    </location>
</feature>
<feature type="mutagenesis site" description="In cmt3-3; loss of activity." evidence="7">
    <original>R</original>
    <variation>K</variation>
    <location>
        <position position="769"/>
    </location>
</feature>
<feature type="mutagenesis site" description="Loss of activity." evidence="8">
    <original>G</original>
    <variation>R</variation>
    <location>
        <position position="807"/>
    </location>
</feature>
<feature type="sequence conflict" description="In Ref. 4; AAK71870." evidence="17" ref="4">
    <original>A</original>
    <variation>V</variation>
    <location>
        <position position="138"/>
    </location>
</feature>
<feature type="sequence conflict" description="In Ref. 4; AAK71870." evidence="17" ref="4">
    <original>K</original>
    <variation>N</variation>
    <location>
        <position position="165"/>
    </location>
</feature>
<feature type="sequence conflict" description="In Ref. 3; AAK69756." evidence="17" ref="3">
    <original>K</original>
    <variation>E</variation>
    <location>
        <position position="166"/>
    </location>
</feature>
<feature type="sequence conflict" description="In Ref. 4; AAK71870." evidence="17" ref="4">
    <original>HKK</original>
    <variation>QKE</variation>
    <location>
        <begin position="266"/>
        <end position="268"/>
    </location>
</feature>
<feature type="sequence conflict" description="In Ref. 4; AAK71870." evidence="17" ref="4">
    <original>E</original>
    <variation>G</variation>
    <location>
        <position position="433"/>
    </location>
</feature>
<feature type="sequence conflict" description="In Ref. 4; AAK71870." evidence="17" ref="4">
    <original>LT</original>
    <variation>II</variation>
    <location>
        <begin position="821"/>
        <end position="822"/>
    </location>
</feature>
<protein>
    <recommendedName>
        <fullName evidence="17">DNA (cytosine-5)-methyltransferase CMT3</fullName>
        <ecNumber evidence="5">2.1.1.37</ecNumber>
    </recommendedName>
    <alternativeName>
        <fullName evidence="14 15 16">Protein CHROMOMETHYLASE 3</fullName>
    </alternativeName>
</protein>